<evidence type="ECO:0000255" key="1">
    <source>
        <dbReference type="HAMAP-Rule" id="MF_00382"/>
    </source>
</evidence>
<evidence type="ECO:0000305" key="2"/>
<feature type="chain" id="PRO_0000243698" description="Large ribosomal subunit protein bL20">
    <location>
        <begin position="1"/>
        <end position="115"/>
    </location>
</feature>
<keyword id="KW-1185">Reference proteome</keyword>
<keyword id="KW-0687">Ribonucleoprotein</keyword>
<keyword id="KW-0689">Ribosomal protein</keyword>
<keyword id="KW-0694">RNA-binding</keyword>
<keyword id="KW-0699">rRNA-binding</keyword>
<name>RL20_METCA</name>
<protein>
    <recommendedName>
        <fullName evidence="1">Large ribosomal subunit protein bL20</fullName>
    </recommendedName>
    <alternativeName>
        <fullName evidence="2">50S ribosomal protein L20</fullName>
    </alternativeName>
</protein>
<organism>
    <name type="scientific">Methylococcus capsulatus (strain ATCC 33009 / NCIMB 11132 / Bath)</name>
    <dbReference type="NCBI Taxonomy" id="243233"/>
    <lineage>
        <taxon>Bacteria</taxon>
        <taxon>Pseudomonadati</taxon>
        <taxon>Pseudomonadota</taxon>
        <taxon>Gammaproteobacteria</taxon>
        <taxon>Methylococcales</taxon>
        <taxon>Methylococcaceae</taxon>
        <taxon>Methylococcus</taxon>
    </lineage>
</organism>
<accession>Q60AZ1</accession>
<comment type="function">
    <text evidence="1">Binds directly to 23S ribosomal RNA and is necessary for the in vitro assembly process of the 50S ribosomal subunit. It is not involved in the protein synthesizing functions of that subunit.</text>
</comment>
<comment type="similarity">
    <text evidence="1">Belongs to the bacterial ribosomal protein bL20 family.</text>
</comment>
<reference key="1">
    <citation type="journal article" date="2004" name="PLoS Biol.">
        <title>Genomic insights into methanotrophy: the complete genome sequence of Methylococcus capsulatus (Bath).</title>
        <authorList>
            <person name="Ward N.L."/>
            <person name="Larsen O."/>
            <person name="Sakwa J."/>
            <person name="Bruseth L."/>
            <person name="Khouri H.M."/>
            <person name="Durkin A.S."/>
            <person name="Dimitrov G."/>
            <person name="Jiang L."/>
            <person name="Scanlan D."/>
            <person name="Kang K.H."/>
            <person name="Lewis M.R."/>
            <person name="Nelson K.E."/>
            <person name="Methe B.A."/>
            <person name="Wu M."/>
            <person name="Heidelberg J.F."/>
            <person name="Paulsen I.T."/>
            <person name="Fouts D.E."/>
            <person name="Ravel J."/>
            <person name="Tettelin H."/>
            <person name="Ren Q."/>
            <person name="Read T.D."/>
            <person name="DeBoy R.T."/>
            <person name="Seshadri R."/>
            <person name="Salzberg S.L."/>
            <person name="Jensen H.B."/>
            <person name="Birkeland N.K."/>
            <person name="Nelson W.C."/>
            <person name="Dodson R.J."/>
            <person name="Grindhaug S.H."/>
            <person name="Holt I.E."/>
            <person name="Eidhammer I."/>
            <person name="Jonasen I."/>
            <person name="Vanaken S."/>
            <person name="Utterback T.R."/>
            <person name="Feldblyum T.V."/>
            <person name="Fraser C.M."/>
            <person name="Lillehaug J.R."/>
            <person name="Eisen J.A."/>
        </authorList>
    </citation>
    <scope>NUCLEOTIDE SEQUENCE [LARGE SCALE GENOMIC DNA]</scope>
    <source>
        <strain>ATCC 33009 / NCIMB 11132 / Bath</strain>
    </source>
</reference>
<proteinExistence type="inferred from homology"/>
<dbReference type="EMBL" id="AE017282">
    <property type="protein sequence ID" value="AAU93166.1"/>
    <property type="molecule type" value="Genomic_DNA"/>
</dbReference>
<dbReference type="RefSeq" id="WP_010960034.1">
    <property type="nucleotide sequence ID" value="NC_002977.6"/>
</dbReference>
<dbReference type="SMR" id="Q60AZ1"/>
<dbReference type="STRING" id="243233.MCA0696"/>
<dbReference type="GeneID" id="88223016"/>
<dbReference type="KEGG" id="mca:MCA0696"/>
<dbReference type="eggNOG" id="COG0292">
    <property type="taxonomic scope" value="Bacteria"/>
</dbReference>
<dbReference type="HOGENOM" id="CLU_123265_0_1_6"/>
<dbReference type="Proteomes" id="UP000006821">
    <property type="component" value="Chromosome"/>
</dbReference>
<dbReference type="GO" id="GO:1990904">
    <property type="term" value="C:ribonucleoprotein complex"/>
    <property type="evidence" value="ECO:0007669"/>
    <property type="project" value="UniProtKB-KW"/>
</dbReference>
<dbReference type="GO" id="GO:0005840">
    <property type="term" value="C:ribosome"/>
    <property type="evidence" value="ECO:0007669"/>
    <property type="project" value="UniProtKB-KW"/>
</dbReference>
<dbReference type="GO" id="GO:0019843">
    <property type="term" value="F:rRNA binding"/>
    <property type="evidence" value="ECO:0007669"/>
    <property type="project" value="UniProtKB-UniRule"/>
</dbReference>
<dbReference type="GO" id="GO:0003735">
    <property type="term" value="F:structural constituent of ribosome"/>
    <property type="evidence" value="ECO:0007669"/>
    <property type="project" value="InterPro"/>
</dbReference>
<dbReference type="GO" id="GO:0000027">
    <property type="term" value="P:ribosomal large subunit assembly"/>
    <property type="evidence" value="ECO:0007669"/>
    <property type="project" value="UniProtKB-UniRule"/>
</dbReference>
<dbReference type="GO" id="GO:0006412">
    <property type="term" value="P:translation"/>
    <property type="evidence" value="ECO:0007669"/>
    <property type="project" value="InterPro"/>
</dbReference>
<dbReference type="CDD" id="cd07026">
    <property type="entry name" value="Ribosomal_L20"/>
    <property type="match status" value="1"/>
</dbReference>
<dbReference type="FunFam" id="1.10.1900.20:FF:000001">
    <property type="entry name" value="50S ribosomal protein L20"/>
    <property type="match status" value="1"/>
</dbReference>
<dbReference type="Gene3D" id="6.10.160.10">
    <property type="match status" value="1"/>
</dbReference>
<dbReference type="Gene3D" id="1.10.1900.20">
    <property type="entry name" value="Ribosomal protein L20"/>
    <property type="match status" value="1"/>
</dbReference>
<dbReference type="HAMAP" id="MF_00382">
    <property type="entry name" value="Ribosomal_bL20"/>
    <property type="match status" value="1"/>
</dbReference>
<dbReference type="InterPro" id="IPR005813">
    <property type="entry name" value="Ribosomal_bL20"/>
</dbReference>
<dbReference type="InterPro" id="IPR049946">
    <property type="entry name" value="RIBOSOMAL_L20_CS"/>
</dbReference>
<dbReference type="InterPro" id="IPR035566">
    <property type="entry name" value="Ribosomal_protein_bL20_C"/>
</dbReference>
<dbReference type="NCBIfam" id="TIGR01032">
    <property type="entry name" value="rplT_bact"/>
    <property type="match status" value="1"/>
</dbReference>
<dbReference type="PANTHER" id="PTHR10986">
    <property type="entry name" value="39S RIBOSOMAL PROTEIN L20"/>
    <property type="match status" value="1"/>
</dbReference>
<dbReference type="Pfam" id="PF00453">
    <property type="entry name" value="Ribosomal_L20"/>
    <property type="match status" value="1"/>
</dbReference>
<dbReference type="PRINTS" id="PR00062">
    <property type="entry name" value="RIBOSOMALL20"/>
</dbReference>
<dbReference type="SUPFAM" id="SSF74731">
    <property type="entry name" value="Ribosomal protein L20"/>
    <property type="match status" value="1"/>
</dbReference>
<dbReference type="PROSITE" id="PS00937">
    <property type="entry name" value="RIBOSOMAL_L20"/>
    <property type="match status" value="1"/>
</dbReference>
<sequence length="115" mass="13226">MARVKRGVIARARHKKVLKQAKGYYGARSRVYRVAKQAVIKAGQYAYRDRRQRKRQFRALWITRINAGAREFGLSYSRFISGLKKASIEIDRKVLADLAVRDKDAFAELARIAQG</sequence>
<gene>
    <name evidence="1" type="primary">rplT</name>
    <name type="ordered locus">MCA0696</name>
</gene>